<name>Y1434_METJA</name>
<evidence type="ECO:0000250" key="1">
    <source>
        <dbReference type="UniProtKB" id="P0AB83"/>
    </source>
</evidence>
<evidence type="ECO:0000269" key="2">
    <source>
    </source>
</evidence>
<evidence type="ECO:0000269" key="3">
    <source>
    </source>
</evidence>
<evidence type="ECO:0000305" key="4"/>
<protein>
    <recommendedName>
        <fullName evidence="4">Putative DNA repair glycosylase MJ1434</fullName>
    </recommendedName>
</protein>
<proteinExistence type="evidence at protein level"/>
<dbReference type="EMBL" id="L77117">
    <property type="protein sequence ID" value="AAB99444.1"/>
    <property type="molecule type" value="Genomic_DNA"/>
</dbReference>
<dbReference type="PIR" id="A64479">
    <property type="entry name" value="A64479"/>
</dbReference>
<dbReference type="RefSeq" id="WP_010870952.1">
    <property type="nucleotide sequence ID" value="NC_000909.1"/>
</dbReference>
<dbReference type="SMR" id="Q58829"/>
<dbReference type="FunCoup" id="Q58829">
    <property type="interactions" value="6"/>
</dbReference>
<dbReference type="STRING" id="243232.MJ_1434"/>
<dbReference type="PaxDb" id="243232-MJ_1434"/>
<dbReference type="EnsemblBacteria" id="AAB99444">
    <property type="protein sequence ID" value="AAB99444"/>
    <property type="gene ID" value="MJ_1434"/>
</dbReference>
<dbReference type="GeneID" id="1452338"/>
<dbReference type="KEGG" id="mja:MJ_1434"/>
<dbReference type="eggNOG" id="arCOG00461">
    <property type="taxonomic scope" value="Archaea"/>
</dbReference>
<dbReference type="HOGENOM" id="CLU_012862_6_0_2"/>
<dbReference type="InParanoid" id="Q58829"/>
<dbReference type="OrthoDB" id="19248at2157"/>
<dbReference type="PhylomeDB" id="Q58829"/>
<dbReference type="BRENDA" id="3.2.2.27">
    <property type="organism ID" value="3260"/>
</dbReference>
<dbReference type="Proteomes" id="UP000000805">
    <property type="component" value="Chromosome"/>
</dbReference>
<dbReference type="GO" id="GO:0051539">
    <property type="term" value="F:4 iron, 4 sulfur cluster binding"/>
    <property type="evidence" value="ECO:0007669"/>
    <property type="project" value="UniProtKB-KW"/>
</dbReference>
<dbReference type="GO" id="GO:0140097">
    <property type="term" value="F:catalytic activity, acting on DNA"/>
    <property type="evidence" value="ECO:0007669"/>
    <property type="project" value="UniProtKB-ARBA"/>
</dbReference>
<dbReference type="GO" id="GO:0016787">
    <property type="term" value="F:hydrolase activity"/>
    <property type="evidence" value="ECO:0007669"/>
    <property type="project" value="UniProtKB-ARBA"/>
</dbReference>
<dbReference type="GO" id="GO:0046872">
    <property type="term" value="F:metal ion binding"/>
    <property type="evidence" value="ECO:0007669"/>
    <property type="project" value="UniProtKB-KW"/>
</dbReference>
<dbReference type="GO" id="GO:0006284">
    <property type="term" value="P:base-excision repair"/>
    <property type="evidence" value="ECO:0007669"/>
    <property type="project" value="InterPro"/>
</dbReference>
<dbReference type="CDD" id="cd00056">
    <property type="entry name" value="ENDO3c"/>
    <property type="match status" value="1"/>
</dbReference>
<dbReference type="Gene3D" id="1.10.1670.10">
    <property type="entry name" value="Helix-hairpin-Helix base-excision DNA repair enzymes (C-terminal)"/>
    <property type="match status" value="1"/>
</dbReference>
<dbReference type="Gene3D" id="1.10.340.30">
    <property type="entry name" value="Hypothetical protein, domain 2"/>
    <property type="match status" value="1"/>
</dbReference>
<dbReference type="InterPro" id="IPR011257">
    <property type="entry name" value="DNA_glycosylase"/>
</dbReference>
<dbReference type="InterPro" id="IPR003651">
    <property type="entry name" value="Endonuclease3_FeS-loop_motif"/>
</dbReference>
<dbReference type="InterPro" id="IPR003265">
    <property type="entry name" value="HhH-GPD_domain"/>
</dbReference>
<dbReference type="InterPro" id="IPR023170">
    <property type="entry name" value="HhH_base_excis_C"/>
</dbReference>
<dbReference type="PANTHER" id="PTHR10359">
    <property type="entry name" value="A/G-SPECIFIC ADENINE GLYCOSYLASE/ENDONUCLEASE III"/>
    <property type="match status" value="1"/>
</dbReference>
<dbReference type="PANTHER" id="PTHR10359:SF19">
    <property type="entry name" value="DNA REPAIR GLYCOSYLASE MJ1434-RELATED"/>
    <property type="match status" value="1"/>
</dbReference>
<dbReference type="Pfam" id="PF00730">
    <property type="entry name" value="HhH-GPD"/>
    <property type="match status" value="1"/>
</dbReference>
<dbReference type="PIRSF" id="PIRSF001435">
    <property type="entry name" value="Nth"/>
    <property type="match status" value="1"/>
</dbReference>
<dbReference type="SMART" id="SM00478">
    <property type="entry name" value="ENDO3c"/>
    <property type="match status" value="1"/>
</dbReference>
<dbReference type="SMART" id="SM00525">
    <property type="entry name" value="FES"/>
    <property type="match status" value="1"/>
</dbReference>
<dbReference type="SUPFAM" id="SSF48150">
    <property type="entry name" value="DNA-glycosylase"/>
    <property type="match status" value="1"/>
</dbReference>
<reference key="1">
    <citation type="journal article" date="1996" name="Science">
        <title>Complete genome sequence of the methanogenic archaeon, Methanococcus jannaschii.</title>
        <authorList>
            <person name="Bult C.J."/>
            <person name="White O."/>
            <person name="Olsen G.J."/>
            <person name="Zhou L."/>
            <person name="Fleischmann R.D."/>
            <person name="Sutton G.G."/>
            <person name="Blake J.A."/>
            <person name="FitzGerald L.M."/>
            <person name="Clayton R.A."/>
            <person name="Gocayne J.D."/>
            <person name="Kerlavage A.R."/>
            <person name="Dougherty B.A."/>
            <person name="Tomb J.-F."/>
            <person name="Adams M.D."/>
            <person name="Reich C.I."/>
            <person name="Overbeek R."/>
            <person name="Kirkness E.F."/>
            <person name="Weinstock K.G."/>
            <person name="Merrick J.M."/>
            <person name="Glodek A."/>
            <person name="Scott J.L."/>
            <person name="Geoghagen N.S.M."/>
            <person name="Weidman J.F."/>
            <person name="Fuhrmann J.L."/>
            <person name="Nguyen D."/>
            <person name="Utterback T.R."/>
            <person name="Kelley J.M."/>
            <person name="Peterson J.D."/>
            <person name="Sadow P.W."/>
            <person name="Hanna M.C."/>
            <person name="Cotton M.D."/>
            <person name="Roberts K.M."/>
            <person name="Hurst M.A."/>
            <person name="Kaine B.P."/>
            <person name="Borodovsky M."/>
            <person name="Klenk H.-P."/>
            <person name="Fraser C.M."/>
            <person name="Smith H.O."/>
            <person name="Woese C.R."/>
            <person name="Venter J.C."/>
        </authorList>
    </citation>
    <scope>NUCLEOTIDE SEQUENCE [LARGE SCALE GENOMIC DNA]</scope>
    <source>
        <strain>ATCC 43067 / DSM 2661 / JAL-1 / JCM 10045 / NBRC 100440</strain>
    </source>
</reference>
<reference key="2">
    <citation type="journal article" date="2003" name="Nucleic Acids Res.">
        <title>A novel uracil-DNA glycosylase family related to the helix-hairpin-helix DNA glycosylase superfamily.</title>
        <authorList>
            <person name="Chung J.H."/>
            <person name="Im E.K."/>
            <person name="Park H.Y."/>
            <person name="Kwon J.H."/>
            <person name="Lee S."/>
            <person name="Oh J."/>
            <person name="Hwang K.C."/>
            <person name="Lee J.H."/>
            <person name="Jang Y."/>
        </authorList>
    </citation>
    <scope>PRELIMINARY FUNCTION AS AN URACIL-DNA GLYCOSYLASE</scope>
    <source>
        <strain>ATCC 43067 / DSM 2661 / JAL-1 / JCM 10045 / NBRC 100440</strain>
    </source>
</reference>
<reference key="3">
    <citation type="journal article" date="2010" name="Nucleic Acids Res.">
        <title>Helix-hairpin-helix protein MJ1434 from Methanocaldococcus jannaschii and EndoIV homologue TTC0482 from Thermus thermophilus HB27 do not process DNA uracil residues.</title>
        <authorList>
            <person name="Schomacher L."/>
            <person name="Smolorz S."/>
            <person name="Ciirdaeva E."/>
            <person name="Ber S."/>
            <person name="Kramer W."/>
            <person name="Fritz H.J."/>
        </authorList>
    </citation>
    <scope>SHOWS THAT IT HAS NO URACIL-DNA GLYCOSYLASE ACTIVITY</scope>
    <scope>MUTAGENESIS OF GLU-132</scope>
</reference>
<comment type="cofactor">
    <cofactor evidence="1">
        <name>[4Fe-4S] cluster</name>
        <dbReference type="ChEBI" id="CHEBI:49883"/>
    </cofactor>
    <text evidence="1">Binds 1 [4Fe-4S] cluster.</text>
</comment>
<comment type="similarity">
    <text evidence="4">Belongs to the Nth/MutY family.</text>
</comment>
<comment type="caution">
    <text evidence="2 3">Was originally thought to have uracil-DNA glycosylase activity, but further protein analysis show that it does not exhibit DNA uracil glycosylase activity when produced in an Ung-deficient Escherichia coli host.</text>
</comment>
<comment type="caution">
    <text evidence="4">Lacks the lysine residue within the HhH motif critical for AP lyase activity.</text>
</comment>
<accession>Q58829</accession>
<keyword id="KW-0004">4Fe-4S</keyword>
<keyword id="KW-0408">Iron</keyword>
<keyword id="KW-0411">Iron-sulfur</keyword>
<keyword id="KW-0479">Metal-binding</keyword>
<keyword id="KW-1185">Reference proteome</keyword>
<sequence length="220" mass="25938">MKENKFEMIYKIYKILLDYYGHQNWWPAETRYEVVVGAILTQNTSWKNVERAINNLKMEDLLEEVKILNVDEDKLKELIRPAGFYNLKAKRLKNVTKFIVENYGNTEEMAKTDKDTLILRAELLSINGVGKETADSILLYALDRESFVVDAYTKRMFSRLGVINEKAKYDEIKEIFEKNLPKDLEIYKEYHALIVEHCKKFCRKKALCDNCPIKEFCLSK</sequence>
<feature type="chain" id="PRO_0000102244" description="Putative DNA repair glycosylase MJ1434">
    <location>
        <begin position="1"/>
        <end position="220"/>
    </location>
</feature>
<feature type="binding site" evidence="1">
    <location>
        <position position="202"/>
    </location>
    <ligand>
        <name>[4Fe-4S] cluster</name>
        <dbReference type="ChEBI" id="CHEBI:49883"/>
    </ligand>
</feature>
<feature type="binding site" evidence="1">
    <location>
        <position position="208"/>
    </location>
    <ligand>
        <name>[4Fe-4S] cluster</name>
        <dbReference type="ChEBI" id="CHEBI:49883"/>
    </ligand>
</feature>
<feature type="binding site" evidence="1">
    <location>
        <position position="211"/>
    </location>
    <ligand>
        <name>[4Fe-4S] cluster</name>
        <dbReference type="ChEBI" id="CHEBI:49883"/>
    </ligand>
</feature>
<feature type="binding site" evidence="1">
    <location>
        <position position="217"/>
    </location>
    <ligand>
        <name>[4Fe-4S] cluster</name>
        <dbReference type="ChEBI" id="CHEBI:49883"/>
    </ligand>
</feature>
<feature type="mutagenesis site" description="Shows AP lyase activity." evidence="3">
    <original>E</original>
    <variation>K</variation>
    <location>
        <position position="132"/>
    </location>
</feature>
<gene>
    <name type="ordered locus">MJ1434</name>
</gene>
<organism>
    <name type="scientific">Methanocaldococcus jannaschii (strain ATCC 43067 / DSM 2661 / JAL-1 / JCM 10045 / NBRC 100440)</name>
    <name type="common">Methanococcus jannaschii</name>
    <dbReference type="NCBI Taxonomy" id="243232"/>
    <lineage>
        <taxon>Archaea</taxon>
        <taxon>Methanobacteriati</taxon>
        <taxon>Methanobacteriota</taxon>
        <taxon>Methanomada group</taxon>
        <taxon>Methanococci</taxon>
        <taxon>Methanococcales</taxon>
        <taxon>Methanocaldococcaceae</taxon>
        <taxon>Methanocaldococcus</taxon>
    </lineage>
</organism>